<proteinExistence type="predicted"/>
<keyword id="KW-1003">Cell membrane</keyword>
<keyword id="KW-0349">Heme</keyword>
<keyword id="KW-0408">Iron</keyword>
<keyword id="KW-0472">Membrane</keyword>
<keyword id="KW-0479">Metal-binding</keyword>
<keyword id="KW-1185">Reference proteome</keyword>
<keyword id="KW-0812">Transmembrane</keyword>
<keyword id="KW-1133">Transmembrane helix</keyword>
<evidence type="ECO:0000255" key="1"/>
<dbReference type="EMBL" id="L16784">
    <property type="protein sequence ID" value="AAA71998.1"/>
    <property type="molecule type" value="Unassigned_DNA"/>
</dbReference>
<dbReference type="EMBL" id="AE017285">
    <property type="protein sequence ID" value="AAS95014.1"/>
    <property type="molecule type" value="Genomic_DNA"/>
</dbReference>
<dbReference type="PIR" id="E40605">
    <property type="entry name" value="E40605"/>
</dbReference>
<dbReference type="RefSeq" id="WP_010937838.1">
    <property type="nucleotide sequence ID" value="NC_002937.3"/>
</dbReference>
<dbReference type="RefSeq" id="YP_009755.1">
    <property type="nucleotide sequence ID" value="NC_002937.3"/>
</dbReference>
<dbReference type="STRING" id="882.DVU_0532"/>
<dbReference type="PaxDb" id="882-DVU_0532"/>
<dbReference type="EnsemblBacteria" id="AAS95014">
    <property type="protein sequence ID" value="AAS95014"/>
    <property type="gene ID" value="DVU_0532"/>
</dbReference>
<dbReference type="KEGG" id="dvu:DVU_0532"/>
<dbReference type="PATRIC" id="fig|882.5.peg.508"/>
<dbReference type="eggNOG" id="COG2181">
    <property type="taxonomic scope" value="Bacteria"/>
</dbReference>
<dbReference type="HOGENOM" id="CLU_107083_0_0_7"/>
<dbReference type="OrthoDB" id="5450521at2"/>
<dbReference type="BioCyc" id="MetaCyc:MONOMER-22166"/>
<dbReference type="Proteomes" id="UP000002194">
    <property type="component" value="Chromosome"/>
</dbReference>
<dbReference type="GO" id="GO:0005886">
    <property type="term" value="C:plasma membrane"/>
    <property type="evidence" value="ECO:0007669"/>
    <property type="project" value="UniProtKB-SubCell"/>
</dbReference>
<dbReference type="GO" id="GO:0046872">
    <property type="term" value="F:metal ion binding"/>
    <property type="evidence" value="ECO:0007669"/>
    <property type="project" value="UniProtKB-KW"/>
</dbReference>
<dbReference type="Gene3D" id="1.20.950.20">
    <property type="entry name" value="Transmembrane di-heme cytochromes, Chain C"/>
    <property type="match status" value="1"/>
</dbReference>
<dbReference type="InterPro" id="IPR036197">
    <property type="entry name" value="NarG-like_sf"/>
</dbReference>
<dbReference type="InterPro" id="IPR054903">
    <property type="entry name" value="sulf_resp_HmcE"/>
</dbReference>
<dbReference type="NCBIfam" id="NF045716">
    <property type="entry name" value="sulf_resp_HmcE"/>
    <property type="match status" value="1"/>
</dbReference>
<dbReference type="SUPFAM" id="SSF103501">
    <property type="entry name" value="Respiratory nitrate reductase 1 gamma chain"/>
    <property type="match status" value="1"/>
</dbReference>
<name>HMC5_NITV2</name>
<sequence>MYAFLTGPMLWASLLVFFGGLLARVIWYIRGLDWRLDRVAYKPHLAIGLQGAVQSALKWLVPFGTYSWRQQPFFTVAFFLFHIGAVLVPLFLAGHNVILEERFGFSLPALPMGVADTLTVLAIIGLVMIALRRIALTEVRILTTGYDWFILAVSAAPFVTGFLARLHVGDYDTWLLAHIITGELFLIVAPFTKLSHIVLFFMSRGQLGMDYAIKRGGATRGPAFPW</sequence>
<protein>
    <recommendedName>
        <fullName>Protein DVU_0532</fullName>
    </recommendedName>
    <alternativeName>
        <fullName>HMC operon ORF 5</fullName>
    </alternativeName>
</protein>
<feature type="chain" id="PRO_0000084005" description="Protein DVU_0532">
    <location>
        <begin position="1"/>
        <end position="226"/>
    </location>
</feature>
<feature type="transmembrane region" description="Helical" evidence="1">
    <location>
        <begin position="1"/>
        <end position="23"/>
    </location>
</feature>
<feature type="transmembrane region" description="Helical" evidence="1">
    <location>
        <begin position="46"/>
        <end position="57"/>
    </location>
</feature>
<feature type="transmembrane region" description="Helical" evidence="1">
    <location>
        <begin position="73"/>
        <end position="99"/>
    </location>
</feature>
<feature type="transmembrane region" description="Helical" evidence="1">
    <location>
        <begin position="112"/>
        <end position="131"/>
    </location>
</feature>
<feature type="transmembrane region" description="Helical" evidence="1">
    <location>
        <begin position="141"/>
        <end position="164"/>
    </location>
</feature>
<feature type="transmembrane region" description="Helical" evidence="1">
    <location>
        <begin position="194"/>
        <end position="222"/>
    </location>
</feature>
<reference key="1">
    <citation type="journal article" date="1993" name="J. Bacteriol.">
        <title>The hmc operon of Desulfovibrio vulgaris subsp. vulgaris Hildenborough encodes a potential transmembrane redox protein complex.</title>
        <authorList>
            <person name="Rossi M."/>
            <person name="Pollock W.B.R."/>
            <person name="Reij M.W."/>
            <person name="Keon R.G."/>
            <person name="Fu R."/>
            <person name="Voordouw G."/>
        </authorList>
    </citation>
    <scope>NUCLEOTIDE SEQUENCE [GENOMIC DNA]</scope>
</reference>
<reference key="2">
    <citation type="journal article" date="2004" name="Nat. Biotechnol.">
        <title>The genome sequence of the anaerobic, sulfate-reducing bacterium Desulfovibrio vulgaris Hildenborough.</title>
        <authorList>
            <person name="Heidelberg J.F."/>
            <person name="Seshadri R."/>
            <person name="Haveman S.A."/>
            <person name="Hemme C.L."/>
            <person name="Paulsen I.T."/>
            <person name="Kolonay J.F."/>
            <person name="Eisen J.A."/>
            <person name="Ward N.L."/>
            <person name="Methe B.A."/>
            <person name="Brinkac L.M."/>
            <person name="Daugherty S.C."/>
            <person name="DeBoy R.T."/>
            <person name="Dodson R.J."/>
            <person name="Durkin A.S."/>
            <person name="Madupu R."/>
            <person name="Nelson W.C."/>
            <person name="Sullivan S.A."/>
            <person name="Fouts D.E."/>
            <person name="Haft D.H."/>
            <person name="Selengut J."/>
            <person name="Peterson J.D."/>
            <person name="Davidsen T.M."/>
            <person name="Zafar N."/>
            <person name="Zhou L."/>
            <person name="Radune D."/>
            <person name="Dimitrov G."/>
            <person name="Hance M."/>
            <person name="Tran K."/>
            <person name="Khouri H.M."/>
            <person name="Gill J."/>
            <person name="Utterback T.R."/>
            <person name="Feldblyum T.V."/>
            <person name="Wall J.D."/>
            <person name="Voordouw G."/>
            <person name="Fraser C.M."/>
        </authorList>
    </citation>
    <scope>NUCLEOTIDE SEQUENCE [LARGE SCALE GENOMIC DNA]</scope>
    <source>
        <strain>ATCC 29579 / DSM 644 / CCUG 34227 / NCIMB 8303 / VKM B-1760 / Hildenborough</strain>
    </source>
</reference>
<accession>P33392</accession>
<organism>
    <name type="scientific">Nitratidesulfovibrio vulgaris (strain ATCC 29579 / DSM 644 / CCUG 34227 / NCIMB 8303 / VKM B-1760 / Hildenborough)</name>
    <name type="common">Desulfovibrio vulgaris</name>
    <dbReference type="NCBI Taxonomy" id="882"/>
    <lineage>
        <taxon>Bacteria</taxon>
        <taxon>Pseudomonadati</taxon>
        <taxon>Thermodesulfobacteriota</taxon>
        <taxon>Desulfovibrionia</taxon>
        <taxon>Desulfovibrionales</taxon>
        <taxon>Desulfovibrionaceae</taxon>
        <taxon>Nitratidesulfovibrio</taxon>
    </lineage>
</organism>
<comment type="function">
    <text>HMWC (high-molecular-weight cytochrome c), ORF2, ORF3, ORF4, ORF5 and ORF6 in the HMC operon form a transmembrane protein complex that allows electron flow from the periplasmic hydrogenase to the cytoplasmic enzymes that catalyze reduction of sulfates.</text>
</comment>
<comment type="cofactor">
    <cofactor>
        <name>heme b</name>
        <dbReference type="ChEBI" id="CHEBI:60344"/>
    </cofactor>
</comment>
<comment type="subcellular location">
    <subcellularLocation>
        <location>Cell membrane</location>
        <topology>Multi-pass membrane protein</topology>
    </subcellularLocation>
</comment>
<gene>
    <name type="ordered locus">DVU_0532</name>
</gene>